<comment type="function">
    <text evidence="2">Cell wall formation.</text>
</comment>
<comment type="catalytic activity">
    <reaction evidence="2">
        <text>2 D-alanine + ATP = D-alanyl-D-alanine + ADP + phosphate + H(+)</text>
        <dbReference type="Rhea" id="RHEA:11224"/>
        <dbReference type="ChEBI" id="CHEBI:15378"/>
        <dbReference type="ChEBI" id="CHEBI:30616"/>
        <dbReference type="ChEBI" id="CHEBI:43474"/>
        <dbReference type="ChEBI" id="CHEBI:57416"/>
        <dbReference type="ChEBI" id="CHEBI:57822"/>
        <dbReference type="ChEBI" id="CHEBI:456216"/>
        <dbReference type="EC" id="6.3.2.4"/>
    </reaction>
</comment>
<comment type="cofactor">
    <cofactor evidence="1">
        <name>Mg(2+)</name>
        <dbReference type="ChEBI" id="CHEBI:18420"/>
    </cofactor>
    <cofactor evidence="1">
        <name>Mn(2+)</name>
        <dbReference type="ChEBI" id="CHEBI:29035"/>
    </cofactor>
    <text evidence="1">Binds 2 magnesium or manganese ions per subunit.</text>
</comment>
<comment type="pathway">
    <text evidence="2">Cell wall biogenesis; peptidoglycan biosynthesis.</text>
</comment>
<comment type="subcellular location">
    <subcellularLocation>
        <location evidence="2">Cytoplasm</location>
    </subcellularLocation>
</comment>
<comment type="similarity">
    <text evidence="2">Belongs to the D-alanine--D-alanine ligase family.</text>
</comment>
<gene>
    <name evidence="2" type="primary">ddl</name>
    <name type="ordered locus">DNO_0979</name>
</gene>
<accession>A5EY21</accession>
<name>DDL_DICNV</name>
<reference key="1">
    <citation type="journal article" date="2007" name="Nat. Biotechnol.">
        <title>Genome sequence and identification of candidate vaccine antigens from the animal pathogen Dichelobacter nodosus.</title>
        <authorList>
            <person name="Myers G.S.A."/>
            <person name="Parker D."/>
            <person name="Al-Hasani K."/>
            <person name="Kennan R.M."/>
            <person name="Seemann T."/>
            <person name="Ren Q."/>
            <person name="Badger J.H."/>
            <person name="Selengut J.D."/>
            <person name="Deboy R.T."/>
            <person name="Tettelin H."/>
            <person name="Boyce J.D."/>
            <person name="McCarl V.P."/>
            <person name="Han X."/>
            <person name="Nelson W.C."/>
            <person name="Madupu R."/>
            <person name="Mohamoud Y."/>
            <person name="Holley T."/>
            <person name="Fedorova N."/>
            <person name="Khouri H."/>
            <person name="Bottomley S.P."/>
            <person name="Whittington R.J."/>
            <person name="Adler B."/>
            <person name="Songer J.G."/>
            <person name="Rood J.I."/>
            <person name="Paulsen I.T."/>
        </authorList>
    </citation>
    <scope>NUCLEOTIDE SEQUENCE [LARGE SCALE GENOMIC DNA]</scope>
    <source>
        <strain>VCS1703A</strain>
    </source>
</reference>
<protein>
    <recommendedName>
        <fullName evidence="2">D-alanine--D-alanine ligase</fullName>
        <ecNumber evidence="2">6.3.2.4</ecNumber>
    </recommendedName>
    <alternativeName>
        <fullName evidence="2">D-Ala-D-Ala ligase</fullName>
    </alternativeName>
    <alternativeName>
        <fullName evidence="2">D-alanylalanine synthetase</fullName>
    </alternativeName>
</protein>
<feature type="chain" id="PRO_0000341089" description="D-alanine--D-alanine ligase">
    <location>
        <begin position="1"/>
        <end position="310"/>
    </location>
</feature>
<feature type="domain" description="ATP-grasp" evidence="2">
    <location>
        <begin position="107"/>
        <end position="305"/>
    </location>
</feature>
<feature type="binding site" evidence="2">
    <location>
        <begin position="134"/>
        <end position="189"/>
    </location>
    <ligand>
        <name>ATP</name>
        <dbReference type="ChEBI" id="CHEBI:30616"/>
    </ligand>
</feature>
<feature type="binding site" evidence="2">
    <location>
        <position position="259"/>
    </location>
    <ligand>
        <name>Mg(2+)</name>
        <dbReference type="ChEBI" id="CHEBI:18420"/>
        <label>1</label>
    </ligand>
</feature>
<feature type="binding site" evidence="2">
    <location>
        <position position="272"/>
    </location>
    <ligand>
        <name>Mg(2+)</name>
        <dbReference type="ChEBI" id="CHEBI:18420"/>
        <label>1</label>
    </ligand>
</feature>
<feature type="binding site" evidence="2">
    <location>
        <position position="272"/>
    </location>
    <ligand>
        <name>Mg(2+)</name>
        <dbReference type="ChEBI" id="CHEBI:18420"/>
        <label>2</label>
    </ligand>
</feature>
<feature type="binding site" evidence="2">
    <location>
        <position position="274"/>
    </location>
    <ligand>
        <name>Mg(2+)</name>
        <dbReference type="ChEBI" id="CHEBI:18420"/>
        <label>2</label>
    </ligand>
</feature>
<keyword id="KW-0067">ATP-binding</keyword>
<keyword id="KW-0133">Cell shape</keyword>
<keyword id="KW-0961">Cell wall biogenesis/degradation</keyword>
<keyword id="KW-0963">Cytoplasm</keyword>
<keyword id="KW-0436">Ligase</keyword>
<keyword id="KW-0460">Magnesium</keyword>
<keyword id="KW-0464">Manganese</keyword>
<keyword id="KW-0479">Metal-binding</keyword>
<keyword id="KW-0547">Nucleotide-binding</keyword>
<keyword id="KW-0573">Peptidoglycan synthesis</keyword>
<keyword id="KW-1185">Reference proteome</keyword>
<evidence type="ECO:0000250" key="1"/>
<evidence type="ECO:0000255" key="2">
    <source>
        <dbReference type="HAMAP-Rule" id="MF_00047"/>
    </source>
</evidence>
<organism>
    <name type="scientific">Dichelobacter nodosus (strain VCS1703A)</name>
    <dbReference type="NCBI Taxonomy" id="246195"/>
    <lineage>
        <taxon>Bacteria</taxon>
        <taxon>Pseudomonadati</taxon>
        <taxon>Pseudomonadota</taxon>
        <taxon>Gammaproteobacteria</taxon>
        <taxon>Cardiobacteriales</taxon>
        <taxon>Cardiobacteriaceae</taxon>
        <taxon>Dichelobacter</taxon>
    </lineage>
</organism>
<proteinExistence type="inferred from homology"/>
<dbReference type="EC" id="6.3.2.4" evidence="2"/>
<dbReference type="EMBL" id="CP000513">
    <property type="protein sequence ID" value="ABQ13693.1"/>
    <property type="molecule type" value="Genomic_DNA"/>
</dbReference>
<dbReference type="RefSeq" id="WP_012031292.1">
    <property type="nucleotide sequence ID" value="NC_009446.1"/>
</dbReference>
<dbReference type="SMR" id="A5EY21"/>
<dbReference type="STRING" id="246195.DNO_0979"/>
<dbReference type="KEGG" id="dno:DNO_0979"/>
<dbReference type="eggNOG" id="COG1181">
    <property type="taxonomic scope" value="Bacteria"/>
</dbReference>
<dbReference type="HOGENOM" id="CLU_039268_1_2_6"/>
<dbReference type="OrthoDB" id="9813261at2"/>
<dbReference type="UniPathway" id="UPA00219"/>
<dbReference type="Proteomes" id="UP000000248">
    <property type="component" value="Chromosome"/>
</dbReference>
<dbReference type="GO" id="GO:0005829">
    <property type="term" value="C:cytosol"/>
    <property type="evidence" value="ECO:0007669"/>
    <property type="project" value="TreeGrafter"/>
</dbReference>
<dbReference type="GO" id="GO:0005524">
    <property type="term" value="F:ATP binding"/>
    <property type="evidence" value="ECO:0007669"/>
    <property type="project" value="UniProtKB-KW"/>
</dbReference>
<dbReference type="GO" id="GO:0008716">
    <property type="term" value="F:D-alanine-D-alanine ligase activity"/>
    <property type="evidence" value="ECO:0007669"/>
    <property type="project" value="UniProtKB-UniRule"/>
</dbReference>
<dbReference type="GO" id="GO:0046872">
    <property type="term" value="F:metal ion binding"/>
    <property type="evidence" value="ECO:0007669"/>
    <property type="project" value="UniProtKB-KW"/>
</dbReference>
<dbReference type="GO" id="GO:0071555">
    <property type="term" value="P:cell wall organization"/>
    <property type="evidence" value="ECO:0007669"/>
    <property type="project" value="UniProtKB-KW"/>
</dbReference>
<dbReference type="GO" id="GO:0009252">
    <property type="term" value="P:peptidoglycan biosynthetic process"/>
    <property type="evidence" value="ECO:0007669"/>
    <property type="project" value="UniProtKB-UniRule"/>
</dbReference>
<dbReference type="GO" id="GO:0008360">
    <property type="term" value="P:regulation of cell shape"/>
    <property type="evidence" value="ECO:0007669"/>
    <property type="project" value="UniProtKB-KW"/>
</dbReference>
<dbReference type="FunFam" id="3.30.470.20:FF:000008">
    <property type="entry name" value="D-alanine--D-alanine ligase"/>
    <property type="match status" value="1"/>
</dbReference>
<dbReference type="Gene3D" id="3.40.50.20">
    <property type="match status" value="1"/>
</dbReference>
<dbReference type="Gene3D" id="3.30.1490.20">
    <property type="entry name" value="ATP-grasp fold, A domain"/>
    <property type="match status" value="1"/>
</dbReference>
<dbReference type="Gene3D" id="3.30.470.20">
    <property type="entry name" value="ATP-grasp fold, B domain"/>
    <property type="match status" value="1"/>
</dbReference>
<dbReference type="HAMAP" id="MF_00047">
    <property type="entry name" value="Dala_Dala_lig"/>
    <property type="match status" value="1"/>
</dbReference>
<dbReference type="InterPro" id="IPR011761">
    <property type="entry name" value="ATP-grasp"/>
</dbReference>
<dbReference type="InterPro" id="IPR013815">
    <property type="entry name" value="ATP_grasp_subdomain_1"/>
</dbReference>
<dbReference type="InterPro" id="IPR000291">
    <property type="entry name" value="D-Ala_lig_Van_CS"/>
</dbReference>
<dbReference type="InterPro" id="IPR005905">
    <property type="entry name" value="D_ala_D_ala"/>
</dbReference>
<dbReference type="InterPro" id="IPR011095">
    <property type="entry name" value="Dala_Dala_lig_C"/>
</dbReference>
<dbReference type="InterPro" id="IPR011127">
    <property type="entry name" value="Dala_Dala_lig_N"/>
</dbReference>
<dbReference type="InterPro" id="IPR016185">
    <property type="entry name" value="PreATP-grasp_dom_sf"/>
</dbReference>
<dbReference type="NCBIfam" id="TIGR01205">
    <property type="entry name" value="D_ala_D_alaTIGR"/>
    <property type="match status" value="1"/>
</dbReference>
<dbReference type="NCBIfam" id="NF002378">
    <property type="entry name" value="PRK01372.1"/>
    <property type="match status" value="1"/>
</dbReference>
<dbReference type="PANTHER" id="PTHR23132">
    <property type="entry name" value="D-ALANINE--D-ALANINE LIGASE"/>
    <property type="match status" value="1"/>
</dbReference>
<dbReference type="PANTHER" id="PTHR23132:SF23">
    <property type="entry name" value="D-ALANINE--D-ALANINE LIGASE B"/>
    <property type="match status" value="1"/>
</dbReference>
<dbReference type="Pfam" id="PF07478">
    <property type="entry name" value="Dala_Dala_lig_C"/>
    <property type="match status" value="1"/>
</dbReference>
<dbReference type="Pfam" id="PF01820">
    <property type="entry name" value="Dala_Dala_lig_N"/>
    <property type="match status" value="1"/>
</dbReference>
<dbReference type="PIRSF" id="PIRSF039102">
    <property type="entry name" value="Ddl/VanB"/>
    <property type="match status" value="1"/>
</dbReference>
<dbReference type="SUPFAM" id="SSF56059">
    <property type="entry name" value="Glutathione synthetase ATP-binding domain-like"/>
    <property type="match status" value="1"/>
</dbReference>
<dbReference type="SUPFAM" id="SSF52440">
    <property type="entry name" value="PreATP-grasp domain"/>
    <property type="match status" value="1"/>
</dbReference>
<dbReference type="PROSITE" id="PS50975">
    <property type="entry name" value="ATP_GRASP"/>
    <property type="match status" value="1"/>
</dbReference>
<dbReference type="PROSITE" id="PS00843">
    <property type="entry name" value="DALA_DALA_LIGASE_1"/>
    <property type="match status" value="1"/>
</dbReference>
<sequence length="310" mass="33452">MIQAIELGKVAVLYGGNSSEREISLIGGRAVHAALCAAGIDAHLLDTGDPNRIWTLKDEHFSRAFVMLHGRGGEDGEIQAILQWLGIPYTGSRVLACALAMDKVVCKKVWQSAGLPVLADVLVTPESRFETLVEQLHCQDFVIKPALEGSSVGVSRVKNQEQLAAAIPFAGGARAKIMAEPWIVGRELTYGIVNDTVLPAIEIVAGNDHDFYDYDAKYHAANTQYLCPAPIDAALDARCREIAFAAFQAIGARGWGRVDMIVDAQNRPYLLEINLVPGMTTHSLVPMAAQQIGMDFSALVQSILAQTLTS</sequence>